<accession>A1WK98</accession>
<sequence>MTTQQTVKIQLVRSPIGTKESHRATVRGLGLRKLNSVSQLQDTPEVRGMINKISYLLKVL</sequence>
<gene>
    <name evidence="1" type="primary">rpmD</name>
    <name type="ordered locus">Veis_2307</name>
</gene>
<reference key="1">
    <citation type="submission" date="2006-12" db="EMBL/GenBank/DDBJ databases">
        <title>Complete sequence of chromosome 1 of Verminephrobacter eiseniae EF01-2.</title>
        <authorList>
            <person name="Copeland A."/>
            <person name="Lucas S."/>
            <person name="Lapidus A."/>
            <person name="Barry K."/>
            <person name="Detter J.C."/>
            <person name="Glavina del Rio T."/>
            <person name="Dalin E."/>
            <person name="Tice H."/>
            <person name="Pitluck S."/>
            <person name="Chertkov O."/>
            <person name="Brettin T."/>
            <person name="Bruce D."/>
            <person name="Han C."/>
            <person name="Tapia R."/>
            <person name="Gilna P."/>
            <person name="Schmutz J."/>
            <person name="Larimer F."/>
            <person name="Land M."/>
            <person name="Hauser L."/>
            <person name="Kyrpides N."/>
            <person name="Kim E."/>
            <person name="Stahl D."/>
            <person name="Richardson P."/>
        </authorList>
    </citation>
    <scope>NUCLEOTIDE SEQUENCE [LARGE SCALE GENOMIC DNA]</scope>
    <source>
        <strain>EF01-2</strain>
    </source>
</reference>
<evidence type="ECO:0000255" key="1">
    <source>
        <dbReference type="HAMAP-Rule" id="MF_01371"/>
    </source>
</evidence>
<evidence type="ECO:0000305" key="2"/>
<protein>
    <recommendedName>
        <fullName evidence="1">Large ribosomal subunit protein uL30</fullName>
    </recommendedName>
    <alternativeName>
        <fullName evidence="2">50S ribosomal protein L30</fullName>
    </alternativeName>
</protein>
<dbReference type="EMBL" id="CP000542">
    <property type="protein sequence ID" value="ABM58055.1"/>
    <property type="molecule type" value="Genomic_DNA"/>
</dbReference>
<dbReference type="RefSeq" id="WP_011810058.1">
    <property type="nucleotide sequence ID" value="NC_008786.1"/>
</dbReference>
<dbReference type="SMR" id="A1WK98"/>
<dbReference type="STRING" id="391735.Veis_2307"/>
<dbReference type="GeneID" id="76460872"/>
<dbReference type="KEGG" id="vei:Veis_2307"/>
<dbReference type="eggNOG" id="COG1841">
    <property type="taxonomic scope" value="Bacteria"/>
</dbReference>
<dbReference type="HOGENOM" id="CLU_131047_1_4_4"/>
<dbReference type="OrthoDB" id="9812790at2"/>
<dbReference type="Proteomes" id="UP000000374">
    <property type="component" value="Chromosome"/>
</dbReference>
<dbReference type="GO" id="GO:0022625">
    <property type="term" value="C:cytosolic large ribosomal subunit"/>
    <property type="evidence" value="ECO:0007669"/>
    <property type="project" value="TreeGrafter"/>
</dbReference>
<dbReference type="GO" id="GO:0003735">
    <property type="term" value="F:structural constituent of ribosome"/>
    <property type="evidence" value="ECO:0007669"/>
    <property type="project" value="InterPro"/>
</dbReference>
<dbReference type="GO" id="GO:0006412">
    <property type="term" value="P:translation"/>
    <property type="evidence" value="ECO:0007669"/>
    <property type="project" value="UniProtKB-UniRule"/>
</dbReference>
<dbReference type="CDD" id="cd01658">
    <property type="entry name" value="Ribosomal_L30"/>
    <property type="match status" value="1"/>
</dbReference>
<dbReference type="FunFam" id="3.30.1390.20:FF:000001">
    <property type="entry name" value="50S ribosomal protein L30"/>
    <property type="match status" value="1"/>
</dbReference>
<dbReference type="Gene3D" id="3.30.1390.20">
    <property type="entry name" value="Ribosomal protein L30, ferredoxin-like fold domain"/>
    <property type="match status" value="1"/>
</dbReference>
<dbReference type="HAMAP" id="MF_01371_B">
    <property type="entry name" value="Ribosomal_uL30_B"/>
    <property type="match status" value="1"/>
</dbReference>
<dbReference type="InterPro" id="IPR036919">
    <property type="entry name" value="Ribo_uL30_ferredoxin-like_sf"/>
</dbReference>
<dbReference type="InterPro" id="IPR005996">
    <property type="entry name" value="Ribosomal_uL30_bac-type"/>
</dbReference>
<dbReference type="InterPro" id="IPR016082">
    <property type="entry name" value="Ribosomal_uL30_ferredoxin-like"/>
</dbReference>
<dbReference type="NCBIfam" id="TIGR01308">
    <property type="entry name" value="rpmD_bact"/>
    <property type="match status" value="1"/>
</dbReference>
<dbReference type="PANTHER" id="PTHR15892:SF2">
    <property type="entry name" value="LARGE RIBOSOMAL SUBUNIT PROTEIN UL30M"/>
    <property type="match status" value="1"/>
</dbReference>
<dbReference type="PANTHER" id="PTHR15892">
    <property type="entry name" value="MITOCHONDRIAL RIBOSOMAL PROTEIN L30"/>
    <property type="match status" value="1"/>
</dbReference>
<dbReference type="Pfam" id="PF00327">
    <property type="entry name" value="Ribosomal_L30"/>
    <property type="match status" value="1"/>
</dbReference>
<dbReference type="PIRSF" id="PIRSF002211">
    <property type="entry name" value="Ribosomal_L30_bac-type"/>
    <property type="match status" value="1"/>
</dbReference>
<dbReference type="SUPFAM" id="SSF55129">
    <property type="entry name" value="Ribosomal protein L30p/L7e"/>
    <property type="match status" value="1"/>
</dbReference>
<keyword id="KW-1185">Reference proteome</keyword>
<keyword id="KW-0687">Ribonucleoprotein</keyword>
<keyword id="KW-0689">Ribosomal protein</keyword>
<comment type="subunit">
    <text evidence="1">Part of the 50S ribosomal subunit.</text>
</comment>
<comment type="similarity">
    <text evidence="1">Belongs to the universal ribosomal protein uL30 family.</text>
</comment>
<organism>
    <name type="scientific">Verminephrobacter eiseniae (strain EF01-2)</name>
    <dbReference type="NCBI Taxonomy" id="391735"/>
    <lineage>
        <taxon>Bacteria</taxon>
        <taxon>Pseudomonadati</taxon>
        <taxon>Pseudomonadota</taxon>
        <taxon>Betaproteobacteria</taxon>
        <taxon>Burkholderiales</taxon>
        <taxon>Comamonadaceae</taxon>
        <taxon>Verminephrobacter</taxon>
    </lineage>
</organism>
<name>RL30_VEREI</name>
<proteinExistence type="inferred from homology"/>
<feature type="chain" id="PRO_1000056128" description="Large ribosomal subunit protein uL30">
    <location>
        <begin position="1"/>
        <end position="60"/>
    </location>
</feature>